<gene>
    <name evidence="1" type="primary">rex</name>
    <name type="ordered locus">EAT1b_2097</name>
</gene>
<sequence length="218" mass="24402">MSQNEPKIPQATAKRLPLYYRFIQSLHASGKQRVSSAELSEAVKVDSATIRRDFSYFGALGKKGYGYNVQYLLDFFRKTLNQDEITNVALVGVGHLGTAFVNYNFLKNNNTHIVVGFDADETKVGTTMSGVPIHHVDEMEQIMKQNKIDVAILTVPSAYAQSVADDLVRFGIKGILNFTPARLTVPDTVRVHHIDLSIELQSLIYFMQHYPTAEGVHQ</sequence>
<comment type="function">
    <text evidence="1">Modulates transcription in response to changes in cellular NADH/NAD(+) redox state.</text>
</comment>
<comment type="subunit">
    <text evidence="1">Homodimer.</text>
</comment>
<comment type="subcellular location">
    <subcellularLocation>
        <location evidence="1">Cytoplasm</location>
    </subcellularLocation>
</comment>
<comment type="similarity">
    <text evidence="1">Belongs to the transcriptional regulatory Rex family.</text>
</comment>
<dbReference type="EMBL" id="CP001615">
    <property type="protein sequence ID" value="ACQ71020.1"/>
    <property type="molecule type" value="Genomic_DNA"/>
</dbReference>
<dbReference type="RefSeq" id="WP_015880579.1">
    <property type="nucleotide sequence ID" value="NZ_MOEL01000004.1"/>
</dbReference>
<dbReference type="SMR" id="C4L1I8"/>
<dbReference type="STRING" id="360911.EAT1b_2097"/>
<dbReference type="KEGG" id="eat:EAT1b_2097"/>
<dbReference type="eggNOG" id="COG2344">
    <property type="taxonomic scope" value="Bacteria"/>
</dbReference>
<dbReference type="HOGENOM" id="CLU_061534_1_1_9"/>
<dbReference type="OrthoDB" id="9784760at2"/>
<dbReference type="Proteomes" id="UP000000716">
    <property type="component" value="Chromosome"/>
</dbReference>
<dbReference type="GO" id="GO:0005737">
    <property type="term" value="C:cytoplasm"/>
    <property type="evidence" value="ECO:0007669"/>
    <property type="project" value="UniProtKB-SubCell"/>
</dbReference>
<dbReference type="GO" id="GO:0003677">
    <property type="term" value="F:DNA binding"/>
    <property type="evidence" value="ECO:0007669"/>
    <property type="project" value="UniProtKB-UniRule"/>
</dbReference>
<dbReference type="GO" id="GO:0003700">
    <property type="term" value="F:DNA-binding transcription factor activity"/>
    <property type="evidence" value="ECO:0007669"/>
    <property type="project" value="UniProtKB-UniRule"/>
</dbReference>
<dbReference type="GO" id="GO:0045892">
    <property type="term" value="P:negative regulation of DNA-templated transcription"/>
    <property type="evidence" value="ECO:0007669"/>
    <property type="project" value="InterPro"/>
</dbReference>
<dbReference type="GO" id="GO:0051775">
    <property type="term" value="P:response to redox state"/>
    <property type="evidence" value="ECO:0007669"/>
    <property type="project" value="InterPro"/>
</dbReference>
<dbReference type="Gene3D" id="3.40.50.720">
    <property type="entry name" value="NAD(P)-binding Rossmann-like Domain"/>
    <property type="match status" value="1"/>
</dbReference>
<dbReference type="Gene3D" id="1.10.10.10">
    <property type="entry name" value="Winged helix-like DNA-binding domain superfamily/Winged helix DNA-binding domain"/>
    <property type="match status" value="1"/>
</dbReference>
<dbReference type="HAMAP" id="MF_01131">
    <property type="entry name" value="Rex"/>
    <property type="match status" value="1"/>
</dbReference>
<dbReference type="InterPro" id="IPR003781">
    <property type="entry name" value="CoA-bd"/>
</dbReference>
<dbReference type="InterPro" id="IPR036291">
    <property type="entry name" value="NAD(P)-bd_dom_sf"/>
</dbReference>
<dbReference type="InterPro" id="IPR009718">
    <property type="entry name" value="Rex_DNA-bd_C_dom"/>
</dbReference>
<dbReference type="InterPro" id="IPR022876">
    <property type="entry name" value="Tscrpt_rep_Rex"/>
</dbReference>
<dbReference type="InterPro" id="IPR036388">
    <property type="entry name" value="WH-like_DNA-bd_sf"/>
</dbReference>
<dbReference type="InterPro" id="IPR036390">
    <property type="entry name" value="WH_DNA-bd_sf"/>
</dbReference>
<dbReference type="NCBIfam" id="NF003989">
    <property type="entry name" value="PRK05472.1-3"/>
    <property type="match status" value="1"/>
</dbReference>
<dbReference type="NCBIfam" id="NF003991">
    <property type="entry name" value="PRK05472.1-5"/>
    <property type="match status" value="1"/>
</dbReference>
<dbReference type="NCBIfam" id="NF003994">
    <property type="entry name" value="PRK05472.2-3"/>
    <property type="match status" value="1"/>
</dbReference>
<dbReference type="NCBIfam" id="NF003995">
    <property type="entry name" value="PRK05472.2-4"/>
    <property type="match status" value="1"/>
</dbReference>
<dbReference type="NCBIfam" id="NF003996">
    <property type="entry name" value="PRK05472.2-5"/>
    <property type="match status" value="1"/>
</dbReference>
<dbReference type="PANTHER" id="PTHR35786">
    <property type="entry name" value="REDOX-SENSING TRANSCRIPTIONAL REPRESSOR REX"/>
    <property type="match status" value="1"/>
</dbReference>
<dbReference type="PANTHER" id="PTHR35786:SF1">
    <property type="entry name" value="REDOX-SENSING TRANSCRIPTIONAL REPRESSOR REX 1"/>
    <property type="match status" value="1"/>
</dbReference>
<dbReference type="Pfam" id="PF02629">
    <property type="entry name" value="CoA_binding"/>
    <property type="match status" value="1"/>
</dbReference>
<dbReference type="Pfam" id="PF06971">
    <property type="entry name" value="Put_DNA-bind_N"/>
    <property type="match status" value="1"/>
</dbReference>
<dbReference type="SMART" id="SM00881">
    <property type="entry name" value="CoA_binding"/>
    <property type="match status" value="1"/>
</dbReference>
<dbReference type="SUPFAM" id="SSF51735">
    <property type="entry name" value="NAD(P)-binding Rossmann-fold domains"/>
    <property type="match status" value="1"/>
</dbReference>
<dbReference type="SUPFAM" id="SSF46785">
    <property type="entry name" value="Winged helix' DNA-binding domain"/>
    <property type="match status" value="1"/>
</dbReference>
<feature type="chain" id="PRO_1000213637" description="Redox-sensing transcriptional repressor Rex">
    <location>
        <begin position="1"/>
        <end position="218"/>
    </location>
</feature>
<feature type="DNA-binding region" description="H-T-H motif" evidence="1">
    <location>
        <begin position="18"/>
        <end position="57"/>
    </location>
</feature>
<feature type="binding site" evidence="1">
    <location>
        <begin position="92"/>
        <end position="97"/>
    </location>
    <ligand>
        <name>NAD(+)</name>
        <dbReference type="ChEBI" id="CHEBI:57540"/>
    </ligand>
</feature>
<keyword id="KW-0963">Cytoplasm</keyword>
<keyword id="KW-0238">DNA-binding</keyword>
<keyword id="KW-0520">NAD</keyword>
<keyword id="KW-0678">Repressor</keyword>
<keyword id="KW-0804">Transcription</keyword>
<keyword id="KW-0805">Transcription regulation</keyword>
<proteinExistence type="inferred from homology"/>
<organism>
    <name type="scientific">Exiguobacterium sp. (strain ATCC BAA-1283 / AT1b)</name>
    <dbReference type="NCBI Taxonomy" id="360911"/>
    <lineage>
        <taxon>Bacteria</taxon>
        <taxon>Bacillati</taxon>
        <taxon>Bacillota</taxon>
        <taxon>Bacilli</taxon>
        <taxon>Bacillales</taxon>
        <taxon>Bacillales Family XII. Incertae Sedis</taxon>
        <taxon>Exiguobacterium</taxon>
    </lineage>
</organism>
<accession>C4L1I8</accession>
<name>REX_EXISA</name>
<protein>
    <recommendedName>
        <fullName evidence="1">Redox-sensing transcriptional repressor Rex</fullName>
    </recommendedName>
</protein>
<evidence type="ECO:0000255" key="1">
    <source>
        <dbReference type="HAMAP-Rule" id="MF_01131"/>
    </source>
</evidence>
<reference key="1">
    <citation type="journal article" date="2011" name="J. Bacteriol.">
        <title>Complete genome sequence of the Thermophilic Bacterium Exiguobacterium sp. AT1b.</title>
        <authorList>
            <person name="Vishnivetskaya T.A."/>
            <person name="Lucas S."/>
            <person name="Copeland A."/>
            <person name="Lapidus A."/>
            <person name="Glavina del Rio T."/>
            <person name="Dalin E."/>
            <person name="Tice H."/>
            <person name="Bruce D.C."/>
            <person name="Goodwin L.A."/>
            <person name="Pitluck S."/>
            <person name="Saunders E."/>
            <person name="Brettin T."/>
            <person name="Detter C."/>
            <person name="Han C."/>
            <person name="Larimer F."/>
            <person name="Land M.L."/>
            <person name="Hauser L.J."/>
            <person name="Kyrpides N.C."/>
            <person name="Ovchinnikova G."/>
            <person name="Kathariou S."/>
            <person name="Ramaley R.F."/>
            <person name="Rodrigues D.F."/>
            <person name="Hendrix C."/>
            <person name="Richardson P."/>
            <person name="Tiedje J.M."/>
        </authorList>
    </citation>
    <scope>NUCLEOTIDE SEQUENCE [LARGE SCALE GENOMIC DNA]</scope>
    <source>
        <strain>ATCC BAA-1283 / AT1b</strain>
    </source>
</reference>